<organism>
    <name type="scientific">Vibrio vulnificus (strain CMCP6)</name>
    <dbReference type="NCBI Taxonomy" id="216895"/>
    <lineage>
        <taxon>Bacteria</taxon>
        <taxon>Pseudomonadati</taxon>
        <taxon>Pseudomonadota</taxon>
        <taxon>Gammaproteobacteria</taxon>
        <taxon>Vibrionales</taxon>
        <taxon>Vibrionaceae</taxon>
        <taxon>Vibrio</taxon>
    </lineage>
</organism>
<gene>
    <name evidence="1" type="primary">rlmN</name>
    <name type="ordered locus">VV1_0429</name>
</gene>
<sequence>MSTEKINLLDFDRKGMRELFAQELGEKAFRADQVMKWIYHFGVDDFDNMTNINKQLREKLKQKCEIVAPVVSEAQHSSDGTIKWAMRVGDQDVETVYIPEEDRATLCVSSQVGCALECKFCSTAQQGFNRNLKVSEIIGQVWRAAREVGLEKETGRRPITNVVMMGMGEPLLNMKNLIPALEIMLDDLGFGLSKRRVTVSTSGVVSGLDQMTGKIDVALAISLHAPNDKLRSEIMPINDRWDIQDFLASVRRYIASSNANRGKVTVEYVLLDHVNDGTEHAHELAQLMKDTPCKINLIPFNPYPGSPYKKPSNSRIDRFQKTLMQYEHTVTIRKTRGDDIDAACGQLVGDVIDRTKRTAMLKAAKGETIEVKAL</sequence>
<keyword id="KW-0004">4Fe-4S</keyword>
<keyword id="KW-0963">Cytoplasm</keyword>
<keyword id="KW-1015">Disulfide bond</keyword>
<keyword id="KW-0408">Iron</keyword>
<keyword id="KW-0411">Iron-sulfur</keyword>
<keyword id="KW-0479">Metal-binding</keyword>
<keyword id="KW-0489">Methyltransferase</keyword>
<keyword id="KW-0698">rRNA processing</keyword>
<keyword id="KW-0949">S-adenosyl-L-methionine</keyword>
<keyword id="KW-0808">Transferase</keyword>
<keyword id="KW-0819">tRNA processing</keyword>
<proteinExistence type="inferred from homology"/>
<protein>
    <recommendedName>
        <fullName evidence="1">Dual-specificity RNA methyltransferase RlmN</fullName>
        <ecNumber evidence="1">2.1.1.192</ecNumber>
    </recommendedName>
    <alternativeName>
        <fullName evidence="1">23S rRNA (adenine(2503)-C(2))-methyltransferase</fullName>
    </alternativeName>
    <alternativeName>
        <fullName evidence="1">23S rRNA m2A2503 methyltransferase</fullName>
    </alternativeName>
    <alternativeName>
        <fullName evidence="1">Ribosomal RNA large subunit methyltransferase N</fullName>
    </alternativeName>
    <alternativeName>
        <fullName evidence="1">tRNA (adenine(37)-C(2))-methyltransferase</fullName>
    </alternativeName>
    <alternativeName>
        <fullName evidence="1">tRNA m2A37 methyltransferase</fullName>
    </alternativeName>
</protein>
<comment type="function">
    <text evidence="1">Specifically methylates position 2 of adenine 2503 in 23S rRNA and position 2 of adenine 37 in tRNAs. m2A2503 modification seems to play a crucial role in the proofreading step occurring at the peptidyl transferase center and thus would serve to optimize ribosomal fidelity.</text>
</comment>
<comment type="catalytic activity">
    <reaction evidence="1">
        <text>adenosine(2503) in 23S rRNA + 2 reduced [2Fe-2S]-[ferredoxin] + 2 S-adenosyl-L-methionine = 2-methyladenosine(2503) in 23S rRNA + 5'-deoxyadenosine + L-methionine + 2 oxidized [2Fe-2S]-[ferredoxin] + S-adenosyl-L-homocysteine</text>
        <dbReference type="Rhea" id="RHEA:42916"/>
        <dbReference type="Rhea" id="RHEA-COMP:10000"/>
        <dbReference type="Rhea" id="RHEA-COMP:10001"/>
        <dbReference type="Rhea" id="RHEA-COMP:10152"/>
        <dbReference type="Rhea" id="RHEA-COMP:10282"/>
        <dbReference type="ChEBI" id="CHEBI:17319"/>
        <dbReference type="ChEBI" id="CHEBI:33737"/>
        <dbReference type="ChEBI" id="CHEBI:33738"/>
        <dbReference type="ChEBI" id="CHEBI:57844"/>
        <dbReference type="ChEBI" id="CHEBI:57856"/>
        <dbReference type="ChEBI" id="CHEBI:59789"/>
        <dbReference type="ChEBI" id="CHEBI:74411"/>
        <dbReference type="ChEBI" id="CHEBI:74497"/>
        <dbReference type="EC" id="2.1.1.192"/>
    </reaction>
</comment>
<comment type="catalytic activity">
    <reaction evidence="1">
        <text>adenosine(37) in tRNA + 2 reduced [2Fe-2S]-[ferredoxin] + 2 S-adenosyl-L-methionine = 2-methyladenosine(37) in tRNA + 5'-deoxyadenosine + L-methionine + 2 oxidized [2Fe-2S]-[ferredoxin] + S-adenosyl-L-homocysteine</text>
        <dbReference type="Rhea" id="RHEA:43332"/>
        <dbReference type="Rhea" id="RHEA-COMP:10000"/>
        <dbReference type="Rhea" id="RHEA-COMP:10001"/>
        <dbReference type="Rhea" id="RHEA-COMP:10162"/>
        <dbReference type="Rhea" id="RHEA-COMP:10485"/>
        <dbReference type="ChEBI" id="CHEBI:17319"/>
        <dbReference type="ChEBI" id="CHEBI:33737"/>
        <dbReference type="ChEBI" id="CHEBI:33738"/>
        <dbReference type="ChEBI" id="CHEBI:57844"/>
        <dbReference type="ChEBI" id="CHEBI:57856"/>
        <dbReference type="ChEBI" id="CHEBI:59789"/>
        <dbReference type="ChEBI" id="CHEBI:74411"/>
        <dbReference type="ChEBI" id="CHEBI:74497"/>
        <dbReference type="EC" id="2.1.1.192"/>
    </reaction>
</comment>
<comment type="cofactor">
    <cofactor evidence="1">
        <name>[4Fe-4S] cluster</name>
        <dbReference type="ChEBI" id="CHEBI:49883"/>
    </cofactor>
    <text evidence="1">Binds 1 [4Fe-4S] cluster. The cluster is coordinated with 3 cysteines and an exchangeable S-adenosyl-L-methionine.</text>
</comment>
<comment type="subcellular location">
    <subcellularLocation>
        <location evidence="1">Cytoplasm</location>
    </subcellularLocation>
</comment>
<comment type="miscellaneous">
    <text evidence="1">Reaction proceeds by a ping-pong mechanism involving intermediate methylation of a conserved cysteine residue.</text>
</comment>
<comment type="similarity">
    <text evidence="1">Belongs to the radical SAM superfamily. RlmN family.</text>
</comment>
<name>RLMN_VIBVU</name>
<accession>Q8DEZ6</accession>
<reference key="1">
    <citation type="submission" date="2002-12" db="EMBL/GenBank/DDBJ databases">
        <title>Complete genome sequence of Vibrio vulnificus CMCP6.</title>
        <authorList>
            <person name="Rhee J.H."/>
            <person name="Kim S.Y."/>
            <person name="Chung S.S."/>
            <person name="Kim J.J."/>
            <person name="Moon Y.H."/>
            <person name="Jeong H."/>
            <person name="Choy H.E."/>
        </authorList>
    </citation>
    <scope>NUCLEOTIDE SEQUENCE [LARGE SCALE GENOMIC DNA]</scope>
    <source>
        <strain>CMCP6</strain>
    </source>
</reference>
<reference key="2">
    <citation type="journal article" date="2011" name="Mol. Syst. Biol.">
        <title>Integrative genome-scale metabolic analysis of Vibrio vulnificus for drug targeting and discovery.</title>
        <authorList>
            <person name="Kim H.U."/>
            <person name="Kim S.Y."/>
            <person name="Jeong H."/>
            <person name="Kim T.Y."/>
            <person name="Kim J.J."/>
            <person name="Choy H.E."/>
            <person name="Yi K.Y."/>
            <person name="Rhee J.H."/>
            <person name="Lee S.Y."/>
        </authorList>
    </citation>
    <scope>SEQUENCE REVISION TO 10 AND 18</scope>
    <source>
        <strain>CMCP6</strain>
    </source>
</reference>
<evidence type="ECO:0000255" key="1">
    <source>
        <dbReference type="HAMAP-Rule" id="MF_01849"/>
    </source>
</evidence>
<evidence type="ECO:0000255" key="2">
    <source>
        <dbReference type="PROSITE-ProRule" id="PRU01266"/>
    </source>
</evidence>
<feature type="chain" id="PRO_0000350520" description="Dual-specificity RNA methyltransferase RlmN">
    <location>
        <begin position="1"/>
        <end position="374"/>
    </location>
</feature>
<feature type="domain" description="Radical SAM core" evidence="2">
    <location>
        <begin position="100"/>
        <end position="339"/>
    </location>
</feature>
<feature type="active site" description="Proton acceptor" evidence="1">
    <location>
        <position position="94"/>
    </location>
</feature>
<feature type="active site" description="S-methylcysteine intermediate" evidence="1">
    <location>
        <position position="344"/>
    </location>
</feature>
<feature type="binding site" evidence="1">
    <location>
        <position position="114"/>
    </location>
    <ligand>
        <name>[4Fe-4S] cluster</name>
        <dbReference type="ChEBI" id="CHEBI:49883"/>
        <note>4Fe-4S-S-AdoMet</note>
    </ligand>
</feature>
<feature type="binding site" evidence="1">
    <location>
        <position position="118"/>
    </location>
    <ligand>
        <name>[4Fe-4S] cluster</name>
        <dbReference type="ChEBI" id="CHEBI:49883"/>
        <note>4Fe-4S-S-AdoMet</note>
    </ligand>
</feature>
<feature type="binding site" evidence="1">
    <location>
        <position position="121"/>
    </location>
    <ligand>
        <name>[4Fe-4S] cluster</name>
        <dbReference type="ChEBI" id="CHEBI:49883"/>
        <note>4Fe-4S-S-AdoMet</note>
    </ligand>
</feature>
<feature type="binding site" evidence="1">
    <location>
        <begin position="168"/>
        <end position="169"/>
    </location>
    <ligand>
        <name>S-adenosyl-L-methionine</name>
        <dbReference type="ChEBI" id="CHEBI:59789"/>
    </ligand>
</feature>
<feature type="binding site" evidence="1">
    <location>
        <position position="200"/>
    </location>
    <ligand>
        <name>S-adenosyl-L-methionine</name>
        <dbReference type="ChEBI" id="CHEBI:59789"/>
    </ligand>
</feature>
<feature type="binding site" evidence="1">
    <location>
        <begin position="222"/>
        <end position="224"/>
    </location>
    <ligand>
        <name>S-adenosyl-L-methionine</name>
        <dbReference type="ChEBI" id="CHEBI:59789"/>
    </ligand>
</feature>
<feature type="binding site" evidence="1">
    <location>
        <position position="301"/>
    </location>
    <ligand>
        <name>S-adenosyl-L-methionine</name>
        <dbReference type="ChEBI" id="CHEBI:59789"/>
    </ligand>
</feature>
<feature type="disulfide bond" description="(transient)" evidence="1">
    <location>
        <begin position="107"/>
        <end position="344"/>
    </location>
</feature>
<dbReference type="EC" id="2.1.1.192" evidence="1"/>
<dbReference type="EMBL" id="AE016795">
    <property type="protein sequence ID" value="AAO08952.2"/>
    <property type="molecule type" value="Genomic_DNA"/>
</dbReference>
<dbReference type="RefSeq" id="WP_011078528.1">
    <property type="nucleotide sequence ID" value="NC_004459.3"/>
</dbReference>
<dbReference type="SMR" id="Q8DEZ6"/>
<dbReference type="KEGG" id="vvu:VV1_0429"/>
<dbReference type="HOGENOM" id="CLU_029101_0_0_6"/>
<dbReference type="Proteomes" id="UP000002275">
    <property type="component" value="Chromosome 1"/>
</dbReference>
<dbReference type="GO" id="GO:0005737">
    <property type="term" value="C:cytoplasm"/>
    <property type="evidence" value="ECO:0007669"/>
    <property type="project" value="UniProtKB-SubCell"/>
</dbReference>
<dbReference type="GO" id="GO:0051539">
    <property type="term" value="F:4 iron, 4 sulfur cluster binding"/>
    <property type="evidence" value="ECO:0007669"/>
    <property type="project" value="UniProtKB-UniRule"/>
</dbReference>
<dbReference type="GO" id="GO:0046872">
    <property type="term" value="F:metal ion binding"/>
    <property type="evidence" value="ECO:0007669"/>
    <property type="project" value="UniProtKB-KW"/>
</dbReference>
<dbReference type="GO" id="GO:0070040">
    <property type="term" value="F:rRNA (adenine(2503)-C2-)-methyltransferase activity"/>
    <property type="evidence" value="ECO:0007669"/>
    <property type="project" value="UniProtKB-UniRule"/>
</dbReference>
<dbReference type="GO" id="GO:0019843">
    <property type="term" value="F:rRNA binding"/>
    <property type="evidence" value="ECO:0007669"/>
    <property type="project" value="UniProtKB-UniRule"/>
</dbReference>
<dbReference type="GO" id="GO:0002935">
    <property type="term" value="F:tRNA (adenine(37)-C2)-methyltransferase activity"/>
    <property type="evidence" value="ECO:0007669"/>
    <property type="project" value="UniProtKB-UniRule"/>
</dbReference>
<dbReference type="GO" id="GO:0000049">
    <property type="term" value="F:tRNA binding"/>
    <property type="evidence" value="ECO:0007669"/>
    <property type="project" value="UniProtKB-UniRule"/>
</dbReference>
<dbReference type="GO" id="GO:0070475">
    <property type="term" value="P:rRNA base methylation"/>
    <property type="evidence" value="ECO:0007669"/>
    <property type="project" value="UniProtKB-UniRule"/>
</dbReference>
<dbReference type="GO" id="GO:0030488">
    <property type="term" value="P:tRNA methylation"/>
    <property type="evidence" value="ECO:0007669"/>
    <property type="project" value="UniProtKB-UniRule"/>
</dbReference>
<dbReference type="CDD" id="cd01335">
    <property type="entry name" value="Radical_SAM"/>
    <property type="match status" value="1"/>
</dbReference>
<dbReference type="FunFam" id="1.10.150.530:FF:000003">
    <property type="entry name" value="Dual-specificity RNA methyltransferase RlmN"/>
    <property type="match status" value="1"/>
</dbReference>
<dbReference type="FunFam" id="3.20.20.70:FF:000008">
    <property type="entry name" value="Dual-specificity RNA methyltransferase RlmN"/>
    <property type="match status" value="1"/>
</dbReference>
<dbReference type="Gene3D" id="1.10.150.530">
    <property type="match status" value="1"/>
</dbReference>
<dbReference type="Gene3D" id="3.20.20.70">
    <property type="entry name" value="Aldolase class I"/>
    <property type="match status" value="1"/>
</dbReference>
<dbReference type="HAMAP" id="MF_01849">
    <property type="entry name" value="RNA_methyltr_RlmN"/>
    <property type="match status" value="1"/>
</dbReference>
<dbReference type="InterPro" id="IPR013785">
    <property type="entry name" value="Aldolase_TIM"/>
</dbReference>
<dbReference type="InterPro" id="IPR040072">
    <property type="entry name" value="Methyltransferase_A"/>
</dbReference>
<dbReference type="InterPro" id="IPR048641">
    <property type="entry name" value="RlmN_N"/>
</dbReference>
<dbReference type="InterPro" id="IPR027492">
    <property type="entry name" value="RNA_MTrfase_RlmN"/>
</dbReference>
<dbReference type="InterPro" id="IPR004383">
    <property type="entry name" value="rRNA_lsu_MTrfase_RlmN/Cfr"/>
</dbReference>
<dbReference type="InterPro" id="IPR007197">
    <property type="entry name" value="rSAM"/>
</dbReference>
<dbReference type="NCBIfam" id="NF008396">
    <property type="entry name" value="PRK11194.1"/>
    <property type="match status" value="1"/>
</dbReference>
<dbReference type="NCBIfam" id="TIGR00048">
    <property type="entry name" value="rRNA_mod_RlmN"/>
    <property type="match status" value="1"/>
</dbReference>
<dbReference type="PANTHER" id="PTHR30544">
    <property type="entry name" value="23S RRNA METHYLTRANSFERASE"/>
    <property type="match status" value="1"/>
</dbReference>
<dbReference type="PANTHER" id="PTHR30544:SF5">
    <property type="entry name" value="RADICAL SAM CORE DOMAIN-CONTAINING PROTEIN"/>
    <property type="match status" value="1"/>
</dbReference>
<dbReference type="Pfam" id="PF04055">
    <property type="entry name" value="Radical_SAM"/>
    <property type="match status" value="1"/>
</dbReference>
<dbReference type="Pfam" id="PF21016">
    <property type="entry name" value="RlmN_N"/>
    <property type="match status" value="1"/>
</dbReference>
<dbReference type="PIRSF" id="PIRSF006004">
    <property type="entry name" value="CHP00048"/>
    <property type="match status" value="1"/>
</dbReference>
<dbReference type="SFLD" id="SFLDF00275">
    <property type="entry name" value="adenosine_C2_methyltransferase"/>
    <property type="match status" value="1"/>
</dbReference>
<dbReference type="SFLD" id="SFLDG01062">
    <property type="entry name" value="methyltransferase_(Class_A)"/>
    <property type="match status" value="1"/>
</dbReference>
<dbReference type="SUPFAM" id="SSF102114">
    <property type="entry name" value="Radical SAM enzymes"/>
    <property type="match status" value="1"/>
</dbReference>
<dbReference type="PROSITE" id="PS51918">
    <property type="entry name" value="RADICAL_SAM"/>
    <property type="match status" value="1"/>
</dbReference>